<comment type="function">
    <text evidence="1">Catalyzes the ATP-dependent phosphorylation of N-acetyl-L-glutamate.</text>
</comment>
<comment type="catalytic activity">
    <reaction evidence="1">
        <text>N-acetyl-L-glutamate + ATP = N-acetyl-L-glutamyl 5-phosphate + ADP</text>
        <dbReference type="Rhea" id="RHEA:14629"/>
        <dbReference type="ChEBI" id="CHEBI:30616"/>
        <dbReference type="ChEBI" id="CHEBI:44337"/>
        <dbReference type="ChEBI" id="CHEBI:57936"/>
        <dbReference type="ChEBI" id="CHEBI:456216"/>
        <dbReference type="EC" id="2.7.2.8"/>
    </reaction>
</comment>
<comment type="pathway">
    <text evidence="1">Amino-acid biosynthesis; L-arginine biosynthesis; N(2)-acetyl-L-ornithine from L-glutamate: step 2/4.</text>
</comment>
<comment type="subcellular location">
    <subcellularLocation>
        <location evidence="1">Cytoplasm</location>
    </subcellularLocation>
</comment>
<comment type="similarity">
    <text evidence="1">Belongs to the acetylglutamate kinase family. ArgB subfamily.</text>
</comment>
<comment type="sequence caution" evidence="2">
    <conflict type="erroneous initiation">
        <sequence resource="EMBL-CDS" id="ABP54352"/>
    </conflict>
</comment>
<reference key="1">
    <citation type="journal article" date="2007" name="Proc. Natl. Acad. Sci. U.S.A.">
        <title>Genome sequencing reveals complex secondary metabolome in the marine actinomycete Salinispora tropica.</title>
        <authorList>
            <person name="Udwary D.W."/>
            <person name="Zeigler L."/>
            <person name="Asolkar R.N."/>
            <person name="Singan V."/>
            <person name="Lapidus A."/>
            <person name="Fenical W."/>
            <person name="Jensen P.R."/>
            <person name="Moore B.S."/>
        </authorList>
    </citation>
    <scope>NUCLEOTIDE SEQUENCE [LARGE SCALE GENOMIC DNA]</scope>
    <source>
        <strain>ATCC BAA-916 / DSM 44818 / JCM 13857 / NBRC 105044 / CNB-440</strain>
    </source>
</reference>
<protein>
    <recommendedName>
        <fullName evidence="1">Acetylglutamate kinase</fullName>
        <ecNumber evidence="1">2.7.2.8</ecNumber>
    </recommendedName>
    <alternativeName>
        <fullName evidence="1">N-acetyl-L-glutamate 5-phosphotransferase</fullName>
    </alternativeName>
    <alternativeName>
        <fullName evidence="1">NAG kinase</fullName>
        <shortName evidence="1">NAGK</shortName>
    </alternativeName>
</protein>
<feature type="chain" id="PRO_5000239287" description="Acetylglutamate kinase">
    <location>
        <begin position="1"/>
        <end position="295"/>
    </location>
</feature>
<feature type="binding site" evidence="1">
    <location>
        <begin position="70"/>
        <end position="71"/>
    </location>
    <ligand>
        <name>substrate</name>
    </ligand>
</feature>
<feature type="binding site" evidence="1">
    <location>
        <position position="92"/>
    </location>
    <ligand>
        <name>substrate</name>
    </ligand>
</feature>
<feature type="binding site" evidence="1">
    <location>
        <position position="191"/>
    </location>
    <ligand>
        <name>substrate</name>
    </ligand>
</feature>
<feature type="site" description="Transition state stabilizer" evidence="1">
    <location>
        <position position="35"/>
    </location>
</feature>
<feature type="site" description="Transition state stabilizer" evidence="1">
    <location>
        <position position="252"/>
    </location>
</feature>
<evidence type="ECO:0000255" key="1">
    <source>
        <dbReference type="HAMAP-Rule" id="MF_00082"/>
    </source>
</evidence>
<evidence type="ECO:0000305" key="2"/>
<organism>
    <name type="scientific">Salinispora tropica (strain ATCC BAA-916 / DSM 44818 / JCM 13857 / NBRC 105044 / CNB-440)</name>
    <dbReference type="NCBI Taxonomy" id="369723"/>
    <lineage>
        <taxon>Bacteria</taxon>
        <taxon>Bacillati</taxon>
        <taxon>Actinomycetota</taxon>
        <taxon>Actinomycetes</taxon>
        <taxon>Micromonosporales</taxon>
        <taxon>Micromonosporaceae</taxon>
        <taxon>Salinispora</taxon>
    </lineage>
</organism>
<name>ARGB_SALTO</name>
<proteinExistence type="inferred from homology"/>
<accession>A4X652</accession>
<sequence length="295" mass="30812">MSVTADLTGAQAKAATLIEALPWLARFAGSCVVVKYGGNAMADPELRREFAADMVFLRYAGLKPVVVHGGGPQISVMLDRLGIDSEFRGGLRVTTPEVMDVVRMVLLGQVGRELVGLINAHGPFAMGLSGEDGGLFTAVRRQAYVDGQPVDIGQVGDVESADISAVTHLLEAGRIPVLSTVAPDADGVPHNLNADTAAAALAIALRARKLVVLTDVPGLYANWPDRSSLVSEVTADELAKLLPSLESGMVPKMEACLRAVRGGVPAAHVVDGRVAHSVLLEIFTSEGFGTMVTPG</sequence>
<gene>
    <name evidence="1" type="primary">argB</name>
    <name type="ordered locus">Strop_1890</name>
</gene>
<keyword id="KW-0028">Amino-acid biosynthesis</keyword>
<keyword id="KW-0055">Arginine biosynthesis</keyword>
<keyword id="KW-0067">ATP-binding</keyword>
<keyword id="KW-0963">Cytoplasm</keyword>
<keyword id="KW-0418">Kinase</keyword>
<keyword id="KW-0547">Nucleotide-binding</keyword>
<keyword id="KW-1185">Reference proteome</keyword>
<keyword id="KW-0808">Transferase</keyword>
<dbReference type="EC" id="2.7.2.8" evidence="1"/>
<dbReference type="EMBL" id="CP000667">
    <property type="protein sequence ID" value="ABP54352.1"/>
    <property type="status" value="ALT_INIT"/>
    <property type="molecule type" value="Genomic_DNA"/>
</dbReference>
<dbReference type="RefSeq" id="WP_026274995.1">
    <property type="nucleotide sequence ID" value="NC_009380.1"/>
</dbReference>
<dbReference type="SMR" id="A4X652"/>
<dbReference type="STRING" id="369723.Strop_1890"/>
<dbReference type="KEGG" id="stp:Strop_1890"/>
<dbReference type="PATRIC" id="fig|369723.5.peg.1938"/>
<dbReference type="eggNOG" id="COG0548">
    <property type="taxonomic scope" value="Bacteria"/>
</dbReference>
<dbReference type="HOGENOM" id="CLU_053680_0_0_11"/>
<dbReference type="UniPathway" id="UPA00068">
    <property type="reaction ID" value="UER00107"/>
</dbReference>
<dbReference type="Proteomes" id="UP000000235">
    <property type="component" value="Chromosome"/>
</dbReference>
<dbReference type="GO" id="GO:0005737">
    <property type="term" value="C:cytoplasm"/>
    <property type="evidence" value="ECO:0007669"/>
    <property type="project" value="UniProtKB-SubCell"/>
</dbReference>
<dbReference type="GO" id="GO:0003991">
    <property type="term" value="F:acetylglutamate kinase activity"/>
    <property type="evidence" value="ECO:0007669"/>
    <property type="project" value="UniProtKB-UniRule"/>
</dbReference>
<dbReference type="GO" id="GO:0005524">
    <property type="term" value="F:ATP binding"/>
    <property type="evidence" value="ECO:0007669"/>
    <property type="project" value="UniProtKB-UniRule"/>
</dbReference>
<dbReference type="GO" id="GO:0042450">
    <property type="term" value="P:arginine biosynthetic process via ornithine"/>
    <property type="evidence" value="ECO:0007669"/>
    <property type="project" value="UniProtKB-UniRule"/>
</dbReference>
<dbReference type="GO" id="GO:0006526">
    <property type="term" value="P:L-arginine biosynthetic process"/>
    <property type="evidence" value="ECO:0007669"/>
    <property type="project" value="UniProtKB-UniPathway"/>
</dbReference>
<dbReference type="CDD" id="cd04250">
    <property type="entry name" value="AAK_NAGK-C"/>
    <property type="match status" value="1"/>
</dbReference>
<dbReference type="FunFam" id="3.40.1160.10:FF:000004">
    <property type="entry name" value="Acetylglutamate kinase"/>
    <property type="match status" value="1"/>
</dbReference>
<dbReference type="Gene3D" id="3.40.1160.10">
    <property type="entry name" value="Acetylglutamate kinase-like"/>
    <property type="match status" value="1"/>
</dbReference>
<dbReference type="HAMAP" id="MF_00082">
    <property type="entry name" value="ArgB"/>
    <property type="match status" value="1"/>
</dbReference>
<dbReference type="InterPro" id="IPR036393">
    <property type="entry name" value="AceGlu_kinase-like_sf"/>
</dbReference>
<dbReference type="InterPro" id="IPR004662">
    <property type="entry name" value="AcgluKinase_fam"/>
</dbReference>
<dbReference type="InterPro" id="IPR037528">
    <property type="entry name" value="ArgB"/>
</dbReference>
<dbReference type="InterPro" id="IPR001048">
    <property type="entry name" value="Asp/Glu/Uridylate_kinase"/>
</dbReference>
<dbReference type="InterPro" id="IPR001057">
    <property type="entry name" value="Glu/AcGlu_kinase"/>
</dbReference>
<dbReference type="InterPro" id="IPR041727">
    <property type="entry name" value="NAGK-C"/>
</dbReference>
<dbReference type="NCBIfam" id="TIGR00761">
    <property type="entry name" value="argB"/>
    <property type="match status" value="1"/>
</dbReference>
<dbReference type="PANTHER" id="PTHR23342">
    <property type="entry name" value="N-ACETYLGLUTAMATE SYNTHASE"/>
    <property type="match status" value="1"/>
</dbReference>
<dbReference type="PANTHER" id="PTHR23342:SF0">
    <property type="entry name" value="N-ACETYLGLUTAMATE SYNTHASE, MITOCHONDRIAL"/>
    <property type="match status" value="1"/>
</dbReference>
<dbReference type="Pfam" id="PF00696">
    <property type="entry name" value="AA_kinase"/>
    <property type="match status" value="1"/>
</dbReference>
<dbReference type="PIRSF" id="PIRSF000728">
    <property type="entry name" value="NAGK"/>
    <property type="match status" value="1"/>
</dbReference>
<dbReference type="PRINTS" id="PR00474">
    <property type="entry name" value="GLU5KINASE"/>
</dbReference>
<dbReference type="SUPFAM" id="SSF53633">
    <property type="entry name" value="Carbamate kinase-like"/>
    <property type="match status" value="1"/>
</dbReference>